<protein>
    <recommendedName>
        <fullName>Autophagy-related protein 20</fullName>
    </recommendedName>
</protein>
<reference key="1">
    <citation type="journal article" date="2004" name="Nature">
        <title>Genome evolution in yeasts.</title>
        <authorList>
            <person name="Dujon B."/>
            <person name="Sherman D."/>
            <person name="Fischer G."/>
            <person name="Durrens P."/>
            <person name="Casaregola S."/>
            <person name="Lafontaine I."/>
            <person name="de Montigny J."/>
            <person name="Marck C."/>
            <person name="Neuveglise C."/>
            <person name="Talla E."/>
            <person name="Goffard N."/>
            <person name="Frangeul L."/>
            <person name="Aigle M."/>
            <person name="Anthouard V."/>
            <person name="Babour A."/>
            <person name="Barbe V."/>
            <person name="Barnay S."/>
            <person name="Blanchin S."/>
            <person name="Beckerich J.-M."/>
            <person name="Beyne E."/>
            <person name="Bleykasten C."/>
            <person name="Boisrame A."/>
            <person name="Boyer J."/>
            <person name="Cattolico L."/>
            <person name="Confanioleri F."/>
            <person name="de Daruvar A."/>
            <person name="Despons L."/>
            <person name="Fabre E."/>
            <person name="Fairhead C."/>
            <person name="Ferry-Dumazet H."/>
            <person name="Groppi A."/>
            <person name="Hantraye F."/>
            <person name="Hennequin C."/>
            <person name="Jauniaux N."/>
            <person name="Joyet P."/>
            <person name="Kachouri R."/>
            <person name="Kerrest A."/>
            <person name="Koszul R."/>
            <person name="Lemaire M."/>
            <person name="Lesur I."/>
            <person name="Ma L."/>
            <person name="Muller H."/>
            <person name="Nicaud J.-M."/>
            <person name="Nikolski M."/>
            <person name="Oztas S."/>
            <person name="Ozier-Kalogeropoulos O."/>
            <person name="Pellenz S."/>
            <person name="Potier S."/>
            <person name="Richard G.-F."/>
            <person name="Straub M.-L."/>
            <person name="Suleau A."/>
            <person name="Swennen D."/>
            <person name="Tekaia F."/>
            <person name="Wesolowski-Louvel M."/>
            <person name="Westhof E."/>
            <person name="Wirth B."/>
            <person name="Zeniou-Meyer M."/>
            <person name="Zivanovic Y."/>
            <person name="Bolotin-Fukuhara M."/>
            <person name="Thierry A."/>
            <person name="Bouchier C."/>
            <person name="Caudron B."/>
            <person name="Scarpelli C."/>
            <person name="Gaillardin C."/>
            <person name="Weissenbach J."/>
            <person name="Wincker P."/>
            <person name="Souciet J.-L."/>
        </authorList>
    </citation>
    <scope>NUCLEOTIDE SEQUENCE [LARGE SCALE GENOMIC DNA]</scope>
    <source>
        <strain>ATCC 36239 / CBS 767 / BCRC 21394 / JCM 1990 / NBRC 0083 / IGC 2968</strain>
    </source>
</reference>
<keyword id="KW-0072">Autophagy</keyword>
<keyword id="KW-0967">Endosome</keyword>
<keyword id="KW-0446">Lipid-binding</keyword>
<keyword id="KW-0472">Membrane</keyword>
<keyword id="KW-0653">Protein transport</keyword>
<keyword id="KW-1185">Reference proteome</keyword>
<keyword id="KW-0813">Transport</keyword>
<comment type="function">
    <text evidence="1">Required for cytoplasm to vacuole transport (Cvt), pexophagy and mitophagy. Also involved in endoplasmic reticulum-specific autophagic process and is essential for the survival of cells subjected to severe ER stress. Functions in protein retrieval from the endocytic pathway (By similarity).</text>
</comment>
<comment type="subcellular location">
    <subcellularLocation>
        <location evidence="1">Endosome membrane</location>
        <topology evidence="1">Peripheral membrane protein</topology>
    </subcellularLocation>
    <subcellularLocation>
        <location evidence="1">Preautophagosomal structure membrane</location>
        <topology evidence="1">Peripheral membrane protein</topology>
    </subcellularLocation>
</comment>
<comment type="domain">
    <text evidence="1">The PX domain binds phosphatidylinositol 3-phosphate which is necessary for peripheral membrane localization to the perivacuolar punctate structures.</text>
</comment>
<comment type="similarity">
    <text evidence="4">Belongs to the sorting nexin family.</text>
</comment>
<sequence>MNPNDNNLFGDIEQDNNPSFYGNQSFLRDPYGKSKQTCPPSVTSNGDPSITNDDNNSAHNNDLVSNSIVLSKKIEQMVNDPNLQINVISSERMINSSVVAYSIELSSFDDNRMIVKRRYSEFKSLRDNLQILFPTLVIPPIPEKHTLFTYLINSIDNSKELNIIETRKRCFANFLKDIIFDSNVALKSCVLVHKFLDPNYELCWNNAVNEPPVSLIPNNLLLANPVNPTDQNGLYSLLPIVNGFELNSNIDNISSLHKLNEDLHKLNEQVHVFELRKEQNERRHPSEPTTSLFTEIPISLIDFEKNFHQNIKVLTELNKLNSRSVKNFKSIINTLIELGGNLNNFSLQIHELNTDSNALSSLIEKFGSTIDSNFLGYEAFLMNDIIPEWQEPISQLVQYYLTSLQLIKFYKFKIIQYKLVYKLKFNKYQELANISTNFESQSKLKDLRNLDIDSPSINEAIKKIELNQKRLKNRKISSKKSWYGLFGGNSKPTFNLREDLPASTIPSEGTGIRRERTPLVSDENMSYPVNPSANLENTNIDINSHYKHKINQIEKELTKLDQLIDLTNTDISTLTQELNLNFNDFLVRVEKKWLVIMLEFIKNGKQLFKDNLQNWNECKVFINDL</sequence>
<gene>
    <name type="primary">ATG20</name>
    <name type="ordered locus">DEHA2A02046g</name>
</gene>
<accession>Q6BZE1</accession>
<proteinExistence type="inferred from homology"/>
<dbReference type="EMBL" id="CR382133">
    <property type="protein sequence ID" value="CAG84380.2"/>
    <property type="molecule type" value="Genomic_DNA"/>
</dbReference>
<dbReference type="RefSeq" id="XP_456428.2">
    <property type="nucleotide sequence ID" value="XM_456428.1"/>
</dbReference>
<dbReference type="FunCoup" id="Q6BZE1">
    <property type="interactions" value="99"/>
</dbReference>
<dbReference type="STRING" id="284592.Q6BZE1"/>
<dbReference type="GeneID" id="2899969"/>
<dbReference type="KEGG" id="dha:DEHA2A02046g"/>
<dbReference type="VEuPathDB" id="FungiDB:DEHA2A02046g"/>
<dbReference type="eggNOG" id="KOG2273">
    <property type="taxonomic scope" value="Eukaryota"/>
</dbReference>
<dbReference type="HOGENOM" id="CLU_025790_0_0_1"/>
<dbReference type="InParanoid" id="Q6BZE1"/>
<dbReference type="OMA" id="DFKDPWG"/>
<dbReference type="OrthoDB" id="289314at2759"/>
<dbReference type="Proteomes" id="UP000000599">
    <property type="component" value="Chromosome A"/>
</dbReference>
<dbReference type="GO" id="GO:0005829">
    <property type="term" value="C:cytosol"/>
    <property type="evidence" value="ECO:0007669"/>
    <property type="project" value="GOC"/>
</dbReference>
<dbReference type="GO" id="GO:0010008">
    <property type="term" value="C:endosome membrane"/>
    <property type="evidence" value="ECO:0007669"/>
    <property type="project" value="UniProtKB-SubCell"/>
</dbReference>
<dbReference type="GO" id="GO:0034045">
    <property type="term" value="C:phagophore assembly site membrane"/>
    <property type="evidence" value="ECO:0007669"/>
    <property type="project" value="UniProtKB-SubCell"/>
</dbReference>
<dbReference type="GO" id="GO:0035091">
    <property type="term" value="F:phosphatidylinositol binding"/>
    <property type="evidence" value="ECO:0007669"/>
    <property type="project" value="InterPro"/>
</dbReference>
<dbReference type="GO" id="GO:0006914">
    <property type="term" value="P:autophagy"/>
    <property type="evidence" value="ECO:0007669"/>
    <property type="project" value="UniProtKB-KW"/>
</dbReference>
<dbReference type="GO" id="GO:0015031">
    <property type="term" value="P:protein transport"/>
    <property type="evidence" value="ECO:0007669"/>
    <property type="project" value="UniProtKB-KW"/>
</dbReference>
<dbReference type="GO" id="GO:0042147">
    <property type="term" value="P:retrograde transport, endosome to Golgi"/>
    <property type="evidence" value="ECO:0007669"/>
    <property type="project" value="InterPro"/>
</dbReference>
<dbReference type="CDD" id="cd06867">
    <property type="entry name" value="PX_SNX41_42"/>
    <property type="match status" value="1"/>
</dbReference>
<dbReference type="Gene3D" id="3.30.1520.10">
    <property type="entry name" value="Phox-like domain"/>
    <property type="match status" value="1"/>
</dbReference>
<dbReference type="InterPro" id="IPR001683">
    <property type="entry name" value="PX_dom"/>
</dbReference>
<dbReference type="InterPro" id="IPR036871">
    <property type="entry name" value="PX_dom_sf"/>
</dbReference>
<dbReference type="InterPro" id="IPR044106">
    <property type="entry name" value="PX_Snx41/Atg20"/>
</dbReference>
<dbReference type="InterPro" id="IPR051079">
    <property type="entry name" value="Sorting_Nexin_Autophagy"/>
</dbReference>
<dbReference type="PANTHER" id="PTHR46979">
    <property type="entry name" value="SORTING NEXIN-41"/>
    <property type="match status" value="1"/>
</dbReference>
<dbReference type="PANTHER" id="PTHR46979:SF2">
    <property type="entry name" value="SORTING NEXIN-41"/>
    <property type="match status" value="1"/>
</dbReference>
<dbReference type="Pfam" id="PF00787">
    <property type="entry name" value="PX"/>
    <property type="match status" value="1"/>
</dbReference>
<dbReference type="SMART" id="SM00312">
    <property type="entry name" value="PX"/>
    <property type="match status" value="1"/>
</dbReference>
<dbReference type="SUPFAM" id="SSF64268">
    <property type="entry name" value="PX domain"/>
    <property type="match status" value="1"/>
</dbReference>
<dbReference type="PROSITE" id="PS50195">
    <property type="entry name" value="PX"/>
    <property type="match status" value="1"/>
</dbReference>
<organism>
    <name type="scientific">Debaryomyces hansenii (strain ATCC 36239 / CBS 767 / BCRC 21394 / JCM 1990 / NBRC 0083 / IGC 2968)</name>
    <name type="common">Yeast</name>
    <name type="synonym">Torulaspora hansenii</name>
    <dbReference type="NCBI Taxonomy" id="284592"/>
    <lineage>
        <taxon>Eukaryota</taxon>
        <taxon>Fungi</taxon>
        <taxon>Dikarya</taxon>
        <taxon>Ascomycota</taxon>
        <taxon>Saccharomycotina</taxon>
        <taxon>Pichiomycetes</taxon>
        <taxon>Debaryomycetaceae</taxon>
        <taxon>Debaryomyces</taxon>
    </lineage>
</organism>
<evidence type="ECO:0000250" key="1"/>
<evidence type="ECO:0000255" key="2">
    <source>
        <dbReference type="PROSITE-ProRule" id="PRU00147"/>
    </source>
</evidence>
<evidence type="ECO:0000256" key="3">
    <source>
        <dbReference type="SAM" id="MobiDB-lite"/>
    </source>
</evidence>
<evidence type="ECO:0000305" key="4"/>
<name>ATG20_DEBHA</name>
<feature type="chain" id="PRO_0000213822" description="Autophagy-related protein 20">
    <location>
        <begin position="1"/>
        <end position="625"/>
    </location>
</feature>
<feature type="domain" description="PX" evidence="2">
    <location>
        <begin position="79"/>
        <end position="202"/>
    </location>
</feature>
<feature type="region of interest" description="Disordered" evidence="3">
    <location>
        <begin position="1"/>
        <end position="59"/>
    </location>
</feature>
<feature type="compositionally biased region" description="Polar residues" evidence="3">
    <location>
        <begin position="15"/>
        <end position="26"/>
    </location>
</feature>
<feature type="compositionally biased region" description="Polar residues" evidence="3">
    <location>
        <begin position="34"/>
        <end position="59"/>
    </location>
</feature>
<feature type="binding site" evidence="1">
    <location>
        <position position="118"/>
    </location>
    <ligand>
        <name>a 1,2-diacyl-sn-glycero-3-phospho-(1D-myo-inositol-3-phosphate)</name>
        <dbReference type="ChEBI" id="CHEBI:58088"/>
    </ligand>
</feature>
<feature type="binding site" evidence="1">
    <location>
        <position position="120"/>
    </location>
    <ligand>
        <name>a 1,2-diacyl-sn-glycero-3-phospho-(1D-myo-inositol-3-phosphate)</name>
        <dbReference type="ChEBI" id="CHEBI:58088"/>
    </ligand>
</feature>
<feature type="binding site" evidence="1">
    <location>
        <position position="144"/>
    </location>
    <ligand>
        <name>a 1,2-diacyl-sn-glycero-3-phospho-(1D-myo-inositol-3-phosphate)</name>
        <dbReference type="ChEBI" id="CHEBI:58088"/>
    </ligand>
</feature>
<feature type="binding site" evidence="1">
    <location>
        <position position="167"/>
    </location>
    <ligand>
        <name>a 1,2-diacyl-sn-glycero-3-phospho-(1D-myo-inositol-3-phosphate)</name>
        <dbReference type="ChEBI" id="CHEBI:58088"/>
    </ligand>
</feature>